<gene>
    <name evidence="1" type="primary">rpmG</name>
    <name type="ordered locus">ECIAI39_4154</name>
</gene>
<keyword id="KW-0687">Ribonucleoprotein</keyword>
<keyword id="KW-0689">Ribosomal protein</keyword>
<dbReference type="EMBL" id="CU928164">
    <property type="protein sequence ID" value="CAR20262.1"/>
    <property type="molecule type" value="Genomic_DNA"/>
</dbReference>
<dbReference type="RefSeq" id="WP_001051798.1">
    <property type="nucleotide sequence ID" value="NC_011750.1"/>
</dbReference>
<dbReference type="RefSeq" id="YP_002410031.1">
    <property type="nucleotide sequence ID" value="NC_011750.1"/>
</dbReference>
<dbReference type="SMR" id="B7NPE2"/>
<dbReference type="STRING" id="585057.ECIAI39_4154"/>
<dbReference type="GeneID" id="97607673"/>
<dbReference type="KEGG" id="ect:ECIAI39_4154"/>
<dbReference type="PATRIC" id="fig|585057.6.peg.4305"/>
<dbReference type="HOGENOM" id="CLU_190949_1_1_6"/>
<dbReference type="PRO" id="PR:B7NPE2"/>
<dbReference type="Proteomes" id="UP000000749">
    <property type="component" value="Chromosome"/>
</dbReference>
<dbReference type="GO" id="GO:0022625">
    <property type="term" value="C:cytosolic large ribosomal subunit"/>
    <property type="evidence" value="ECO:0007669"/>
    <property type="project" value="TreeGrafter"/>
</dbReference>
<dbReference type="GO" id="GO:0003735">
    <property type="term" value="F:structural constituent of ribosome"/>
    <property type="evidence" value="ECO:0007669"/>
    <property type="project" value="InterPro"/>
</dbReference>
<dbReference type="GO" id="GO:0006412">
    <property type="term" value="P:translation"/>
    <property type="evidence" value="ECO:0007669"/>
    <property type="project" value="UniProtKB-UniRule"/>
</dbReference>
<dbReference type="FunFam" id="2.20.28.120:FF:000001">
    <property type="entry name" value="50S ribosomal protein L33"/>
    <property type="match status" value="1"/>
</dbReference>
<dbReference type="Gene3D" id="2.20.28.120">
    <property type="entry name" value="Ribosomal protein L33"/>
    <property type="match status" value="1"/>
</dbReference>
<dbReference type="HAMAP" id="MF_00294">
    <property type="entry name" value="Ribosomal_bL33"/>
    <property type="match status" value="1"/>
</dbReference>
<dbReference type="InterPro" id="IPR001705">
    <property type="entry name" value="Ribosomal_bL33"/>
</dbReference>
<dbReference type="InterPro" id="IPR018264">
    <property type="entry name" value="Ribosomal_bL33_CS"/>
</dbReference>
<dbReference type="InterPro" id="IPR038584">
    <property type="entry name" value="Ribosomal_bL33_sf"/>
</dbReference>
<dbReference type="InterPro" id="IPR011332">
    <property type="entry name" value="Ribosomal_zn-bd"/>
</dbReference>
<dbReference type="NCBIfam" id="NF001860">
    <property type="entry name" value="PRK00595.1"/>
    <property type="match status" value="1"/>
</dbReference>
<dbReference type="NCBIfam" id="TIGR01023">
    <property type="entry name" value="rpmG_bact"/>
    <property type="match status" value="1"/>
</dbReference>
<dbReference type="PANTHER" id="PTHR15238">
    <property type="entry name" value="54S RIBOSOMAL PROTEIN L39, MITOCHONDRIAL"/>
    <property type="match status" value="1"/>
</dbReference>
<dbReference type="PANTHER" id="PTHR15238:SF1">
    <property type="entry name" value="LARGE RIBOSOMAL SUBUNIT PROTEIN BL33M"/>
    <property type="match status" value="1"/>
</dbReference>
<dbReference type="Pfam" id="PF00471">
    <property type="entry name" value="Ribosomal_L33"/>
    <property type="match status" value="1"/>
</dbReference>
<dbReference type="SUPFAM" id="SSF57829">
    <property type="entry name" value="Zn-binding ribosomal proteins"/>
    <property type="match status" value="1"/>
</dbReference>
<dbReference type="PROSITE" id="PS00582">
    <property type="entry name" value="RIBOSOMAL_L33"/>
    <property type="match status" value="1"/>
</dbReference>
<accession>B7NPE2</accession>
<organism>
    <name type="scientific">Escherichia coli O7:K1 (strain IAI39 / ExPEC)</name>
    <dbReference type="NCBI Taxonomy" id="585057"/>
    <lineage>
        <taxon>Bacteria</taxon>
        <taxon>Pseudomonadati</taxon>
        <taxon>Pseudomonadota</taxon>
        <taxon>Gammaproteobacteria</taxon>
        <taxon>Enterobacterales</taxon>
        <taxon>Enterobacteriaceae</taxon>
        <taxon>Escherichia</taxon>
    </lineage>
</organism>
<proteinExistence type="inferred from homology"/>
<feature type="chain" id="PRO_1000119438" description="Large ribosomal subunit protein bL33">
    <location>
        <begin position="1"/>
        <end position="55"/>
    </location>
</feature>
<reference key="1">
    <citation type="journal article" date="2009" name="PLoS Genet.">
        <title>Organised genome dynamics in the Escherichia coli species results in highly diverse adaptive paths.</title>
        <authorList>
            <person name="Touchon M."/>
            <person name="Hoede C."/>
            <person name="Tenaillon O."/>
            <person name="Barbe V."/>
            <person name="Baeriswyl S."/>
            <person name="Bidet P."/>
            <person name="Bingen E."/>
            <person name="Bonacorsi S."/>
            <person name="Bouchier C."/>
            <person name="Bouvet O."/>
            <person name="Calteau A."/>
            <person name="Chiapello H."/>
            <person name="Clermont O."/>
            <person name="Cruveiller S."/>
            <person name="Danchin A."/>
            <person name="Diard M."/>
            <person name="Dossat C."/>
            <person name="Karoui M.E."/>
            <person name="Frapy E."/>
            <person name="Garry L."/>
            <person name="Ghigo J.M."/>
            <person name="Gilles A.M."/>
            <person name="Johnson J."/>
            <person name="Le Bouguenec C."/>
            <person name="Lescat M."/>
            <person name="Mangenot S."/>
            <person name="Martinez-Jehanne V."/>
            <person name="Matic I."/>
            <person name="Nassif X."/>
            <person name="Oztas S."/>
            <person name="Petit M.A."/>
            <person name="Pichon C."/>
            <person name="Rouy Z."/>
            <person name="Ruf C.S."/>
            <person name="Schneider D."/>
            <person name="Tourret J."/>
            <person name="Vacherie B."/>
            <person name="Vallenet D."/>
            <person name="Medigue C."/>
            <person name="Rocha E.P.C."/>
            <person name="Denamur E."/>
        </authorList>
    </citation>
    <scope>NUCLEOTIDE SEQUENCE [LARGE SCALE GENOMIC DNA]</scope>
    <source>
        <strain>IAI39 / ExPEC</strain>
    </source>
</reference>
<name>RL33_ECO7I</name>
<sequence length="55" mass="6372">MAKGIREKIKLVSSAGTGHFYTTTKNKRTKPEKLELKKFDPVVRQHVIYKEAKIK</sequence>
<evidence type="ECO:0000255" key="1">
    <source>
        <dbReference type="HAMAP-Rule" id="MF_00294"/>
    </source>
</evidence>
<evidence type="ECO:0000305" key="2"/>
<comment type="similarity">
    <text evidence="1">Belongs to the bacterial ribosomal protein bL33 family.</text>
</comment>
<protein>
    <recommendedName>
        <fullName evidence="1">Large ribosomal subunit protein bL33</fullName>
    </recommendedName>
    <alternativeName>
        <fullName evidence="2">50S ribosomal protein L33</fullName>
    </alternativeName>
</protein>